<reference key="1">
    <citation type="journal article" date="1994" name="FEBS Lett.">
        <title>Cloning provides evidence for a family of inward rectifier and G-protein coupled K+ channels in the brain.</title>
        <authorList>
            <person name="Lesage F."/>
            <person name="Duprat F."/>
            <person name="Fink M."/>
            <person name="Guillemare E."/>
            <person name="Coppola T."/>
            <person name="Lazdunski M."/>
            <person name="Hugnot J.-P."/>
        </authorList>
    </citation>
    <scope>NUCLEOTIDE SEQUENCE [MRNA] (ISOFORM GIRK2-1)</scope>
    <scope>FUNCTION</scope>
    <scope>TRANSPORTER ACTIVITY</scope>
    <source>
        <tissue>Brain</tissue>
    </source>
</reference>
<reference key="2">
    <citation type="journal article" date="1995" name="J. Biol. Chem.">
        <title>Molecular properties of neuronal G-protein-activated inwardly rectifying K+ channels.</title>
        <authorList>
            <person name="Lesage F."/>
            <person name="Guillemare E."/>
            <person name="Fink M."/>
            <person name="Duprat F."/>
            <person name="Heurteaux C."/>
            <person name="Fosset M."/>
            <person name="Romey G."/>
            <person name="Barhanin J."/>
            <person name="Lazdunski M."/>
        </authorList>
    </citation>
    <scope>NUCLEOTIDE SEQUENCE [MRNA] (ISOFORM GIRK2A)</scope>
    <scope>ALTERNATIVE SPLICING (ISOFORM GIRK2-1)</scope>
    <scope>FUNCTION (ISOFORM GIRK2-1)</scope>
    <scope>TRANSPORTER ACTIVITY (ISOFORM GIRK2-1)</scope>
    <scope>SUBUNIT (ISOFORMS GIRK2-1 AND GIRK2A)</scope>
    <scope>TISSUE SPECIFICITY</scope>
    <source>
        <tissue>Brain</tissue>
    </source>
</reference>
<reference key="3">
    <citation type="journal article" date="1996" name="Biochem. Biophys. Res. Commun.">
        <title>A novel ubiquitously distributed isoform of GIRK2 (GIRK2B) enhances GIRK1 expression of the G-protein-gated K+ current in Xenopus oocytes.</title>
        <authorList>
            <person name="Isomoto S."/>
            <person name="Kondo C."/>
            <person name="Takahashi N."/>
            <person name="Matsumoto S."/>
            <person name="Yamada M."/>
            <person name="Takumi T."/>
            <person name="Horio Y."/>
            <person name="Kurachi Y."/>
        </authorList>
    </citation>
    <scope>NUCLEOTIDE SEQUENCE [MRNA] (ISOFORM GIRK2B)</scope>
    <scope>FUNCTION</scope>
    <scope>TRANSPORTER ACTIVITY</scope>
    <scope>SUBUNIT</scope>
    <source>
        <tissue>Brain</tissue>
    </source>
</reference>
<reference key="4">
    <citation type="journal article" date="1998" name="Genomics">
        <title>Characterization of murine Girk2 transcript isoforms: structure and differential expression.</title>
        <authorList>
            <person name="Wei J."/>
            <person name="Hodes M.E."/>
            <person name="Piva R."/>
            <person name="Feng Y."/>
            <person name="Wang Y."/>
            <person name="Ghetti B."/>
            <person name="Dlouhy S.R."/>
        </authorList>
    </citation>
    <scope>NUCLEOTIDE SEQUENCE [GENOMIC DNA / MRNA]</scope>
    <scope>ALTERNATIVE SPLICING</scope>
    <source>
        <strain>129/SvJ</strain>
    </source>
</reference>
<reference key="5">
    <citation type="journal article" date="1999" name="J. Physiol. (Lond.)">
        <title>Molecular cloning and characterization of a novel splicing variant of the Kir3.2 subunit predominantly expressed in mouse testis.</title>
        <authorList>
            <person name="Inanobe A."/>
            <person name="Horio Y."/>
            <person name="Fujita A."/>
            <person name="Tanemoto M."/>
            <person name="Hibino H."/>
            <person name="Inageda K."/>
            <person name="Kurachi Y."/>
        </authorList>
    </citation>
    <scope>NUCLEOTIDE SEQUENCE [MRNA] (ISOFORM GIRK2D)</scope>
    <scope>FUNCTION</scope>
    <scope>TRANSPORTER ACTIVITY</scope>
    <scope>SUBUNIT</scope>
    <scope>SUBCELLULAR LOCATION</scope>
</reference>
<reference key="6">
    <citation type="submission" date="2009-01" db="UniProtKB">
        <authorList>
            <person name="Lubec G."/>
            <person name="Sunyer B."/>
            <person name="Chen W.-Q."/>
        </authorList>
    </citation>
    <scope>PROTEIN SEQUENCE OF 379-390</scope>
    <scope>IDENTIFICATION BY MASS SPECTROMETRY</scope>
    <source>
        <strain>OF1</strain>
        <tissue>Hippocampus</tissue>
    </source>
</reference>
<reference key="7">
    <citation type="journal article" date="1999" name="J. Membr. Biol.">
        <title>Functional expression and characterization of G-protein-gated inwardly rectifying K+ channels containing GIRK3.</title>
        <authorList>
            <person name="Jelacic T.M."/>
            <person name="Sims S.M."/>
            <person name="Clapham D.E."/>
        </authorList>
    </citation>
    <scope>FUNCTION</scope>
    <scope>SUBUNIT</scope>
</reference>
<reference key="8">
    <citation type="journal article" date="1995" name="Nat. Genet.">
        <title>A potassium channel mutation in weaver mice implicates membrane excitability in granule cell differentiation.</title>
        <authorList>
            <person name="Patil N."/>
            <person name="Cox D.R."/>
            <person name="Bhat D."/>
            <person name="Faham M."/>
            <person name="Myers R.M."/>
            <person name="Peterson A.S."/>
        </authorList>
    </citation>
    <scope>INVOLVEMENT IN WV PHENOTYPE</scope>
    <scope>VARIANT WV SER-156</scope>
</reference>
<reference key="9">
    <citation type="journal article" date="2010" name="Cell">
        <title>A tissue-specific atlas of mouse protein phosphorylation and expression.</title>
        <authorList>
            <person name="Huttlin E.L."/>
            <person name="Jedrychowski M.P."/>
            <person name="Elias J.E."/>
            <person name="Goswami T."/>
            <person name="Rad R."/>
            <person name="Beausoleil S.A."/>
            <person name="Villen J."/>
            <person name="Haas W."/>
            <person name="Sowa M.E."/>
            <person name="Gygi S.P."/>
        </authorList>
    </citation>
    <scope>PHOSPHORYLATION [LARGE SCALE ANALYSIS] AT SER-18 AND SER-25</scope>
    <scope>IDENTIFICATION BY MASS SPECTROMETRY [LARGE SCALE ANALYSIS]</scope>
    <source>
        <tissue>Brain</tissue>
    </source>
</reference>
<feature type="chain" id="PRO_0000154944" description="G protein-activated inward rectifier potassium channel 2">
    <location>
        <begin position="1"/>
        <end position="425"/>
    </location>
</feature>
<feature type="topological domain" description="Cytoplasmic" evidence="1">
    <location>
        <begin position="1"/>
        <end position="91"/>
    </location>
</feature>
<feature type="transmembrane region" description="Helical; Name=M1" evidence="1">
    <location>
        <begin position="92"/>
        <end position="116"/>
    </location>
</feature>
<feature type="topological domain" description="Extracellular" evidence="1">
    <location>
        <begin position="117"/>
        <end position="140"/>
    </location>
</feature>
<feature type="intramembrane region" description="Helical; Pore-forming; Name=H5" evidence="1">
    <location>
        <begin position="141"/>
        <end position="152"/>
    </location>
</feature>
<feature type="intramembrane region" description="Pore-forming" evidence="1">
    <location>
        <begin position="153"/>
        <end position="159"/>
    </location>
</feature>
<feature type="topological domain" description="Extracellular" evidence="1">
    <location>
        <begin position="160"/>
        <end position="168"/>
    </location>
</feature>
<feature type="transmembrane region" description="Helical; Name=M2" evidence="1">
    <location>
        <begin position="169"/>
        <end position="190"/>
    </location>
</feature>
<feature type="topological domain" description="Cytoplasmic" evidence="1">
    <location>
        <begin position="191"/>
        <end position="425"/>
    </location>
</feature>
<feature type="region of interest" description="Disordered" evidence="5">
    <location>
        <begin position="392"/>
        <end position="425"/>
    </location>
</feature>
<feature type="short sequence motif" description="Selectivity filter" evidence="1">
    <location>
        <begin position="154"/>
        <end position="159"/>
    </location>
</feature>
<feature type="short sequence motif" description="PDZ-binding">
    <location>
        <begin position="422"/>
        <end position="425"/>
    </location>
</feature>
<feature type="site" description="Role in the control of polyamine-mediated channel gating and in the blocking by intracellular magnesium" evidence="1">
    <location>
        <position position="184"/>
    </location>
</feature>
<feature type="modified residue" description="Phosphoserine" evidence="15">
    <location>
        <position position="18"/>
    </location>
</feature>
<feature type="modified residue" description="Phosphoserine" evidence="15">
    <location>
        <position position="25"/>
    </location>
</feature>
<feature type="splice variant" id="VSP_002806" description="In isoform GIRK2C." evidence="14">
    <location>
        <begin position="1"/>
        <end position="18"/>
    </location>
</feature>
<feature type="splice variant" id="VSP_002804" description="In isoform GIRK2B." evidence="13">
    <original>MTCQARSSY</original>
    <variation>KMGFALGFL</variation>
    <location>
        <begin position="319"/>
        <end position="327"/>
    </location>
</feature>
<feature type="splice variant" id="VSP_002807" description="In isoform GIRK2C." evidence="14">
    <original>MT</original>
    <variation>QF</variation>
    <location>
        <begin position="319"/>
        <end position="320"/>
    </location>
</feature>
<feature type="splice variant" id="VSP_002808" description="In isoform GIRK2C." evidence="14">
    <location>
        <begin position="321"/>
        <end position="425"/>
    </location>
</feature>
<feature type="splice variant" id="VSP_002805" description="In isoform GIRK2B." evidence="13">
    <location>
        <begin position="328"/>
        <end position="425"/>
    </location>
</feature>
<feature type="splice variant" id="VSP_002803" description="In isoform GIRK2-1." evidence="12">
    <location>
        <begin position="415"/>
        <end position="425"/>
    </location>
</feature>
<feature type="sequence variant" description="In wv." evidence="9">
    <original>G</original>
    <variation>S</variation>
    <location>
        <position position="156"/>
    </location>
</feature>
<feature type="sequence variant">
    <original>I</original>
    <variation>M</variation>
    <location>
        <position position="313"/>
    </location>
</feature>
<feature type="sequence variant">
    <original>M</original>
    <variation>L</variation>
    <location>
        <position position="344"/>
    </location>
</feature>
<feature type="sequence conflict" description="In Ref. 3 and 4." evidence="14" ref="3 4">
    <original>V</original>
    <variation>C</variation>
    <location>
        <position position="67"/>
    </location>
</feature>
<feature type="sequence conflict" description="In Ref. 3; BAA12972, 4; AAC34145 and 5; BAA88430." evidence="14" ref="3 4 5">
    <original>S</original>
    <variation>T</variation>
    <location>
        <position position="260"/>
    </location>
</feature>
<feature type="sequence conflict" description="In Ref. 5; BAA88430." evidence="14" ref="5">
    <original>V</original>
    <variation>L</variation>
    <location>
        <position position="381"/>
    </location>
</feature>
<feature type="strand" evidence="22">
    <location>
        <begin position="61"/>
        <end position="63"/>
    </location>
</feature>
<feature type="strand" evidence="21">
    <location>
        <begin position="67"/>
        <end position="69"/>
    </location>
</feature>
<feature type="helix" evidence="16">
    <location>
        <begin position="76"/>
        <end position="80"/>
    </location>
</feature>
<feature type="helix" evidence="16">
    <location>
        <begin position="82"/>
        <end position="88"/>
    </location>
</feature>
<feature type="helix" evidence="16">
    <location>
        <begin position="91"/>
        <end position="119"/>
    </location>
</feature>
<feature type="turn" evidence="16">
    <location>
        <begin position="120"/>
        <end position="124"/>
    </location>
</feature>
<feature type="strand" evidence="19">
    <location>
        <begin position="129"/>
        <end position="131"/>
    </location>
</feature>
<feature type="strand" evidence="16">
    <location>
        <begin position="134"/>
        <end position="136"/>
    </location>
</feature>
<feature type="helix" evidence="16">
    <location>
        <begin position="143"/>
        <end position="152"/>
    </location>
</feature>
<feature type="strand" evidence="16">
    <location>
        <begin position="158"/>
        <end position="160"/>
    </location>
</feature>
<feature type="helix" evidence="16">
    <location>
        <begin position="167"/>
        <end position="196"/>
    </location>
</feature>
<feature type="turn" evidence="17">
    <location>
        <begin position="198"/>
        <end position="200"/>
    </location>
</feature>
<feature type="helix" evidence="18">
    <location>
        <begin position="202"/>
        <end position="204"/>
    </location>
</feature>
<feature type="strand" evidence="18">
    <location>
        <begin position="205"/>
        <end position="207"/>
    </location>
</feature>
<feature type="strand" evidence="18">
    <location>
        <begin position="211"/>
        <end position="216"/>
    </location>
</feature>
<feature type="strand" evidence="18">
    <location>
        <begin position="219"/>
        <end position="226"/>
    </location>
</feature>
<feature type="strand" evidence="16">
    <location>
        <begin position="230"/>
        <end position="232"/>
    </location>
</feature>
<feature type="strand" evidence="18">
    <location>
        <begin position="234"/>
        <end position="248"/>
    </location>
</feature>
<feature type="strand" evidence="20">
    <location>
        <begin position="250"/>
        <end position="252"/>
    </location>
</feature>
<feature type="strand" evidence="18">
    <location>
        <begin position="254"/>
        <end position="262"/>
    </location>
</feature>
<feature type="turn" evidence="18">
    <location>
        <begin position="266"/>
        <end position="271"/>
    </location>
</feature>
<feature type="strand" evidence="17">
    <location>
        <begin position="272"/>
        <end position="274"/>
    </location>
</feature>
<feature type="strand" evidence="18">
    <location>
        <begin position="279"/>
        <end position="284"/>
    </location>
</feature>
<feature type="turn" evidence="18">
    <location>
        <begin position="290"/>
        <end position="293"/>
    </location>
</feature>
<feature type="turn" evidence="18">
    <location>
        <begin position="296"/>
        <end position="298"/>
    </location>
</feature>
<feature type="helix" evidence="18">
    <location>
        <begin position="299"/>
        <end position="301"/>
    </location>
</feature>
<feature type="strand" evidence="18">
    <location>
        <begin position="305"/>
        <end position="314"/>
    </location>
</feature>
<feature type="turn" evidence="18">
    <location>
        <begin position="315"/>
        <end position="317"/>
    </location>
</feature>
<feature type="strand" evidence="18">
    <location>
        <begin position="320"/>
        <end position="328"/>
    </location>
</feature>
<feature type="helix" evidence="18">
    <location>
        <begin position="329"/>
        <end position="331"/>
    </location>
</feature>
<feature type="strand" evidence="18">
    <location>
        <begin position="332"/>
        <end position="334"/>
    </location>
</feature>
<feature type="strand" evidence="18">
    <location>
        <begin position="336"/>
        <end position="338"/>
    </location>
</feature>
<feature type="strand" evidence="18">
    <location>
        <begin position="342"/>
        <end position="345"/>
    </location>
</feature>
<feature type="strand" evidence="18">
    <location>
        <begin position="348"/>
        <end position="352"/>
    </location>
</feature>
<feature type="helix" evidence="18">
    <location>
        <begin position="353"/>
        <end position="355"/>
    </location>
</feature>
<feature type="strand" evidence="18">
    <location>
        <begin position="359"/>
        <end position="361"/>
    </location>
</feature>
<feature type="helix" evidence="18">
    <location>
        <begin position="369"/>
        <end position="377"/>
    </location>
</feature>
<protein>
    <recommendedName>
        <fullName>G protein-activated inward rectifier potassium channel 2</fullName>
        <shortName>GIRK-2</shortName>
    </recommendedName>
    <alternativeName>
        <fullName>Inward rectifier K(+) channel Kir3.2</fullName>
    </alternativeName>
    <alternativeName>
        <fullName>Potassium channel, inwardly rectifying subfamily J member 6</fullName>
    </alternativeName>
</protein>
<dbReference type="EMBL" id="U37253">
    <property type="protein sequence ID" value="AAA91457.1"/>
    <property type="molecule type" value="mRNA"/>
</dbReference>
<dbReference type="EMBL" id="U11859">
    <property type="protein sequence ID" value="AAA53245.1"/>
    <property type="molecule type" value="mRNA"/>
</dbReference>
<dbReference type="EMBL" id="U51122">
    <property type="protein sequence ID" value="AAC34141.1"/>
    <property type="molecule type" value="mRNA"/>
</dbReference>
<dbReference type="EMBL" id="U51123">
    <property type="protein sequence ID" value="AAC34142.1"/>
    <property type="molecule type" value="mRNA"/>
</dbReference>
<dbReference type="EMBL" id="U51124">
    <property type="protein sequence ID" value="AAC34143.1"/>
    <property type="molecule type" value="mRNA"/>
</dbReference>
<dbReference type="EMBL" id="U51125">
    <property type="protein sequence ID" value="AAC34144.1"/>
    <property type="molecule type" value="mRNA"/>
</dbReference>
<dbReference type="EMBL" id="U51126">
    <property type="protein sequence ID" value="AAC34145.1"/>
    <property type="molecule type" value="mRNA"/>
</dbReference>
<dbReference type="EMBL" id="AF040049">
    <property type="protein sequence ID" value="AAC34286.1"/>
    <property type="molecule type" value="Genomic_DNA"/>
</dbReference>
<dbReference type="EMBL" id="AF040047">
    <property type="protein sequence ID" value="AAC34286.1"/>
    <property type="status" value="JOINED"/>
    <property type="molecule type" value="Genomic_DNA"/>
</dbReference>
<dbReference type="EMBL" id="AF040050">
    <property type="protein sequence ID" value="AAC34287.1"/>
    <property type="molecule type" value="Genomic_DNA"/>
</dbReference>
<dbReference type="EMBL" id="AF040049">
    <property type="protein sequence ID" value="AAC34287.1"/>
    <property type="status" value="JOINED"/>
    <property type="molecule type" value="Genomic_DNA"/>
</dbReference>
<dbReference type="EMBL" id="AF040051">
    <property type="protein sequence ID" value="AAC34285.1"/>
    <property type="molecule type" value="Genomic_DNA"/>
</dbReference>
<dbReference type="EMBL" id="AF040047">
    <property type="protein sequence ID" value="AAC34285.1"/>
    <property type="status" value="JOINED"/>
    <property type="molecule type" value="Genomic_DNA"/>
</dbReference>
<dbReference type="EMBL" id="AF040049">
    <property type="protein sequence ID" value="AAC34285.1"/>
    <property type="status" value="JOINED"/>
    <property type="molecule type" value="Genomic_DNA"/>
</dbReference>
<dbReference type="EMBL" id="AF040052">
    <property type="protein sequence ID" value="AAC34284.1"/>
    <property type="molecule type" value="Genomic_DNA"/>
</dbReference>
<dbReference type="EMBL" id="AF040047">
    <property type="protein sequence ID" value="AAC34284.1"/>
    <property type="status" value="JOINED"/>
    <property type="molecule type" value="Genomic_DNA"/>
</dbReference>
<dbReference type="EMBL" id="AF040049">
    <property type="protein sequence ID" value="AAC34284.1"/>
    <property type="status" value="JOINED"/>
    <property type="molecule type" value="Genomic_DNA"/>
</dbReference>
<dbReference type="EMBL" id="AF040051">
    <property type="protein sequence ID" value="AAC34284.1"/>
    <property type="status" value="JOINED"/>
    <property type="molecule type" value="Genomic_DNA"/>
</dbReference>
<dbReference type="EMBL" id="D86040">
    <property type="protein sequence ID" value="BAA12972.1"/>
    <property type="molecule type" value="mRNA"/>
</dbReference>
<dbReference type="EMBL" id="AB029502">
    <property type="protein sequence ID" value="BAA88430.1"/>
    <property type="molecule type" value="mRNA"/>
</dbReference>
<dbReference type="CCDS" id="CCDS37408.1">
    <molecule id="P48542-2"/>
</dbReference>
<dbReference type="CCDS" id="CCDS49921.1">
    <molecule id="P48542-4"/>
</dbReference>
<dbReference type="PIR" id="JC4586">
    <property type="entry name" value="JC4586"/>
</dbReference>
<dbReference type="PIR" id="S48738">
    <property type="entry name" value="S48738"/>
</dbReference>
<dbReference type="RefSeq" id="NP_001020756.1">
    <property type="nucleotide sequence ID" value="NM_001025585.2"/>
</dbReference>
<dbReference type="RefSeq" id="NP_001020761.1">
    <property type="nucleotide sequence ID" value="NM_001025590.1"/>
</dbReference>
<dbReference type="RefSeq" id="NP_034736.2">
    <property type="nucleotide sequence ID" value="NM_010606.2"/>
</dbReference>
<dbReference type="RefSeq" id="XP_011244406.1">
    <property type="nucleotide sequence ID" value="XM_011246104.1"/>
</dbReference>
<dbReference type="PDB" id="2E4F">
    <property type="method" value="X-ray"/>
    <property type="resolution" value="2.30 A"/>
    <property type="chains" value="A=53-74, A=200-381"/>
</dbReference>
<dbReference type="PDB" id="3AGW">
    <property type="method" value="X-ray"/>
    <property type="resolution" value="2.20 A"/>
    <property type="chains" value="A=53-380"/>
</dbReference>
<dbReference type="PDB" id="3AT8">
    <property type="method" value="X-ray"/>
    <property type="resolution" value="3.30 A"/>
    <property type="chains" value="A=53-380"/>
</dbReference>
<dbReference type="PDB" id="3AT9">
    <property type="method" value="X-ray"/>
    <property type="resolution" value="3.30 A"/>
    <property type="chains" value="A=53-380"/>
</dbReference>
<dbReference type="PDB" id="3ATA">
    <property type="method" value="X-ray"/>
    <property type="resolution" value="3.49 A"/>
    <property type="chains" value="A=53-380"/>
</dbReference>
<dbReference type="PDB" id="3ATB">
    <property type="method" value="X-ray"/>
    <property type="resolution" value="3.51 A"/>
    <property type="chains" value="A=53-380"/>
</dbReference>
<dbReference type="PDB" id="3ATD">
    <property type="method" value="X-ray"/>
    <property type="resolution" value="3.01 A"/>
    <property type="chains" value="A=53-380"/>
</dbReference>
<dbReference type="PDB" id="3ATE">
    <property type="method" value="X-ray"/>
    <property type="resolution" value="3.20 A"/>
    <property type="chains" value="A=53-380"/>
</dbReference>
<dbReference type="PDB" id="3ATF">
    <property type="method" value="X-ray"/>
    <property type="resolution" value="2.95 A"/>
    <property type="chains" value="A=53-380"/>
</dbReference>
<dbReference type="PDB" id="3AUW">
    <property type="method" value="X-ray"/>
    <property type="resolution" value="3.56 A"/>
    <property type="chains" value="A/C=53-74, B/D=200-380"/>
</dbReference>
<dbReference type="PDB" id="3SYA">
    <property type="method" value="X-ray"/>
    <property type="resolution" value="2.98 A"/>
    <property type="chains" value="A=52-380"/>
</dbReference>
<dbReference type="PDB" id="3SYC">
    <property type="method" value="X-ray"/>
    <property type="resolution" value="3.41 A"/>
    <property type="chains" value="A=52-380"/>
</dbReference>
<dbReference type="PDB" id="3SYO">
    <property type="method" value="X-ray"/>
    <property type="resolution" value="3.54 A"/>
    <property type="chains" value="A=52-380"/>
</dbReference>
<dbReference type="PDB" id="3SYP">
    <property type="method" value="X-ray"/>
    <property type="resolution" value="3.12 A"/>
    <property type="chains" value="A=52-380"/>
</dbReference>
<dbReference type="PDB" id="3SYQ">
    <property type="method" value="X-ray"/>
    <property type="resolution" value="3.44 A"/>
    <property type="chains" value="A/B=52-380"/>
</dbReference>
<dbReference type="PDB" id="3VSQ">
    <property type="method" value="X-ray"/>
    <property type="resolution" value="2.00 A"/>
    <property type="chains" value="A=53-380"/>
</dbReference>
<dbReference type="PDB" id="4KFM">
    <property type="method" value="X-ray"/>
    <property type="resolution" value="3.45 A"/>
    <property type="chains" value="A=52-380"/>
</dbReference>
<dbReference type="PDB" id="6XEU">
    <property type="method" value="EM"/>
    <property type="resolution" value="3.20 A"/>
    <property type="chains" value="A/D/G/J=52-380"/>
</dbReference>
<dbReference type="PDB" id="6XEV">
    <property type="method" value="EM"/>
    <property type="resolution" value="3.50 A"/>
    <property type="chains" value="A/E/I/M=52-380"/>
</dbReference>
<dbReference type="PDB" id="6XIS">
    <property type="method" value="EM"/>
    <property type="resolution" value="3.90 A"/>
    <property type="chains" value="A/B/C/D=52-380"/>
</dbReference>
<dbReference type="PDB" id="6XIT">
    <property type="method" value="EM"/>
    <property type="resolution" value="3.30 A"/>
    <property type="chains" value="A/B/C/D=52-380"/>
</dbReference>
<dbReference type="PDBsum" id="2E4F"/>
<dbReference type="PDBsum" id="3AGW"/>
<dbReference type="PDBsum" id="3AT8"/>
<dbReference type="PDBsum" id="3AT9"/>
<dbReference type="PDBsum" id="3ATA"/>
<dbReference type="PDBsum" id="3ATB"/>
<dbReference type="PDBsum" id="3ATD"/>
<dbReference type="PDBsum" id="3ATE"/>
<dbReference type="PDBsum" id="3ATF"/>
<dbReference type="PDBsum" id="3AUW"/>
<dbReference type="PDBsum" id="3SYA"/>
<dbReference type="PDBsum" id="3SYC"/>
<dbReference type="PDBsum" id="3SYO"/>
<dbReference type="PDBsum" id="3SYP"/>
<dbReference type="PDBsum" id="3SYQ"/>
<dbReference type="PDBsum" id="3VSQ"/>
<dbReference type="PDBsum" id="4KFM"/>
<dbReference type="PDBsum" id="6XEU"/>
<dbReference type="PDBsum" id="6XEV"/>
<dbReference type="PDBsum" id="6XIS"/>
<dbReference type="PDBsum" id="6XIT"/>
<dbReference type="EMDB" id="EMD-22151"/>
<dbReference type="EMDB" id="EMD-22152"/>
<dbReference type="EMDB" id="EMD-22153"/>
<dbReference type="EMDB" id="EMD-22155"/>
<dbReference type="SMR" id="P48542"/>
<dbReference type="BioGRID" id="200904">
    <property type="interactions" value="4"/>
</dbReference>
<dbReference type="CORUM" id="P48542"/>
<dbReference type="DIP" id="DIP-60215N"/>
<dbReference type="FunCoup" id="P48542">
    <property type="interactions" value="372"/>
</dbReference>
<dbReference type="IntAct" id="P48542">
    <property type="interactions" value="4"/>
</dbReference>
<dbReference type="STRING" id="10090.ENSMUSP00000097108"/>
<dbReference type="ChEMBL" id="CHEMBL4680029"/>
<dbReference type="DrugCentral" id="P48542"/>
<dbReference type="GuidetoPHARMACOLOGY" id="435"/>
<dbReference type="iPTMnet" id="P48542"/>
<dbReference type="PaxDb" id="10090-ENSMUSP00000097108"/>
<dbReference type="PeptideAtlas" id="P48542"/>
<dbReference type="ProteomicsDB" id="263498">
    <molecule id="P48542-1"/>
</dbReference>
<dbReference type="ProteomicsDB" id="263499">
    <molecule id="P48542-2"/>
</dbReference>
<dbReference type="ProteomicsDB" id="263500">
    <molecule id="P48542-3"/>
</dbReference>
<dbReference type="ProteomicsDB" id="263501">
    <molecule id="P48542-4"/>
</dbReference>
<dbReference type="DNASU" id="16522"/>
<dbReference type="GeneID" id="16522"/>
<dbReference type="KEGG" id="mmu:16522"/>
<dbReference type="AGR" id="MGI:104781"/>
<dbReference type="CTD" id="3763"/>
<dbReference type="MGI" id="MGI:104781">
    <property type="gene designation" value="Kcnj6"/>
</dbReference>
<dbReference type="eggNOG" id="KOG3827">
    <property type="taxonomic scope" value="Eukaryota"/>
</dbReference>
<dbReference type="InParanoid" id="P48542"/>
<dbReference type="OrthoDB" id="273257at2759"/>
<dbReference type="PhylomeDB" id="P48542"/>
<dbReference type="Reactome" id="R-MMU-1296041">
    <property type="pathway name" value="Activation of G protein gated Potassium channels"/>
</dbReference>
<dbReference type="Reactome" id="R-MMU-997272">
    <property type="pathway name" value="Inhibition of voltage gated Ca2+ channels via Gbeta/gamma subunits"/>
</dbReference>
<dbReference type="BioGRID-ORCS" id="16522">
    <property type="hits" value="3 hits in 80 CRISPR screens"/>
</dbReference>
<dbReference type="ChiTaRS" id="Kcnj6">
    <property type="organism name" value="mouse"/>
</dbReference>
<dbReference type="EvolutionaryTrace" id="P48542"/>
<dbReference type="PRO" id="PR:P48542"/>
<dbReference type="Proteomes" id="UP000000589">
    <property type="component" value="Unplaced"/>
</dbReference>
<dbReference type="RNAct" id="P48542">
    <property type="molecule type" value="protein"/>
</dbReference>
<dbReference type="GO" id="GO:1902937">
    <property type="term" value="C:inward rectifier potassium channel complex"/>
    <property type="evidence" value="ECO:0000314"/>
    <property type="project" value="UniProtKB"/>
</dbReference>
<dbReference type="GO" id="GO:0016020">
    <property type="term" value="C:membrane"/>
    <property type="evidence" value="ECO:0000314"/>
    <property type="project" value="UniProtKB"/>
</dbReference>
<dbReference type="GO" id="GO:0098688">
    <property type="term" value="C:parallel fiber to Purkinje cell synapse"/>
    <property type="evidence" value="ECO:0000314"/>
    <property type="project" value="SynGO"/>
</dbReference>
<dbReference type="GO" id="GO:0098794">
    <property type="term" value="C:postsynapse"/>
    <property type="evidence" value="ECO:0000314"/>
    <property type="project" value="SynGO"/>
</dbReference>
<dbReference type="GO" id="GO:0098793">
    <property type="term" value="C:presynapse"/>
    <property type="evidence" value="ECO:0000314"/>
    <property type="project" value="SynGO"/>
</dbReference>
<dbReference type="GO" id="GO:0042734">
    <property type="term" value="C:presynaptic membrane"/>
    <property type="evidence" value="ECO:0000314"/>
    <property type="project" value="SynGO"/>
</dbReference>
<dbReference type="GO" id="GO:0015467">
    <property type="term" value="F:G-protein activated inward rectifier potassium channel activity"/>
    <property type="evidence" value="ECO:0000314"/>
    <property type="project" value="UniProtKB"/>
</dbReference>
<dbReference type="GO" id="GO:0005242">
    <property type="term" value="F:inward rectifier potassium channel activity"/>
    <property type="evidence" value="ECO:0000314"/>
    <property type="project" value="UniProtKB"/>
</dbReference>
<dbReference type="GO" id="GO:0005267">
    <property type="term" value="F:potassium channel activity"/>
    <property type="evidence" value="ECO:0000314"/>
    <property type="project" value="MGI"/>
</dbReference>
<dbReference type="GO" id="GO:0099508">
    <property type="term" value="F:voltage-gated monoatomic ion channel activity involved in regulation of presynaptic membrane potential"/>
    <property type="evidence" value="ECO:0000314"/>
    <property type="project" value="SynGO"/>
</dbReference>
<dbReference type="GO" id="GO:0046676">
    <property type="term" value="P:negative regulation of insulin secretion"/>
    <property type="evidence" value="ECO:0000304"/>
    <property type="project" value="MGI"/>
</dbReference>
<dbReference type="FunFam" id="1.10.287.70:FF:000019">
    <property type="entry name" value="G protein-activated inward rectifier potassium channel 1"/>
    <property type="match status" value="1"/>
</dbReference>
<dbReference type="FunFam" id="2.60.40.1400:FF:000005">
    <property type="entry name" value="G protein-activated inward rectifier potassium channel 2"/>
    <property type="match status" value="1"/>
</dbReference>
<dbReference type="Gene3D" id="1.10.287.70">
    <property type="match status" value="1"/>
</dbReference>
<dbReference type="Gene3D" id="2.60.40.1400">
    <property type="entry name" value="G protein-activated inward rectifier potassium channel 1"/>
    <property type="match status" value="1"/>
</dbReference>
<dbReference type="InterPro" id="IPR014756">
    <property type="entry name" value="Ig_E-set"/>
</dbReference>
<dbReference type="InterPro" id="IPR041647">
    <property type="entry name" value="IRK_C"/>
</dbReference>
<dbReference type="InterPro" id="IPR016449">
    <property type="entry name" value="K_chnl_inward-rec_Kir"/>
</dbReference>
<dbReference type="InterPro" id="IPR003275">
    <property type="entry name" value="K_chnl_inward-rec_Kir3.2"/>
</dbReference>
<dbReference type="InterPro" id="IPR013518">
    <property type="entry name" value="K_chnl_inward-rec_Kir_cyto"/>
</dbReference>
<dbReference type="InterPro" id="IPR040445">
    <property type="entry name" value="Kir_TM"/>
</dbReference>
<dbReference type="PANTHER" id="PTHR11767:SF19">
    <property type="entry name" value="G PROTEIN-ACTIVATED INWARD RECTIFIER POTASSIUM CHANNEL 2"/>
    <property type="match status" value="1"/>
</dbReference>
<dbReference type="PANTHER" id="PTHR11767">
    <property type="entry name" value="INWARD RECTIFIER POTASSIUM CHANNEL"/>
    <property type="match status" value="1"/>
</dbReference>
<dbReference type="Pfam" id="PF01007">
    <property type="entry name" value="IRK"/>
    <property type="match status" value="1"/>
</dbReference>
<dbReference type="Pfam" id="PF17655">
    <property type="entry name" value="IRK_C"/>
    <property type="match status" value="1"/>
</dbReference>
<dbReference type="PIRSF" id="PIRSF005465">
    <property type="entry name" value="GIRK_kir"/>
    <property type="match status" value="1"/>
</dbReference>
<dbReference type="PRINTS" id="PR01328">
    <property type="entry name" value="KIR32CHANNEL"/>
</dbReference>
<dbReference type="PRINTS" id="PR01320">
    <property type="entry name" value="KIRCHANNEL"/>
</dbReference>
<dbReference type="SUPFAM" id="SSF81296">
    <property type="entry name" value="E set domains"/>
    <property type="match status" value="1"/>
</dbReference>
<dbReference type="SUPFAM" id="SSF81324">
    <property type="entry name" value="Voltage-gated potassium channels"/>
    <property type="match status" value="1"/>
</dbReference>
<proteinExistence type="evidence at protein level"/>
<sequence length="425" mass="48652">MTMAKLTESMTNVLEGDSMDQDVESPVAIHQPKLPKQARDDLPRHISRDRTKRKIQRYVRKDGKCNVHHGNVRETYRYLTDIFTTLVDLKWRFNLLIFVMVYTVTWLFFGMIWWLIAYIRGDMDHIEDPSWTPCVTNLNGFVSAFLFSIETETTIGYGYRVITDKCPEGIILLLIQSVLGSIVNAFMVGCMFVKISQPKKRAETLVFSTHAVISMRDGKLCLMFRVGDLRNSHIVEASIRAKLIKSKQTSEGEFIPLNQSDINVGYYTGDDRLFLVSPLIISHEINQQSPFWEISKAQLPKEELEIVVILEGIVEATGMTCQARSSYITSEILWGYRFTPVLTMEDGFYEVDYNSFHETYETSTPSLSAKELAELANRAEVPLSWSVSSKLNQHAELETEEEEKNPEELTERNGDVANLENESKV</sequence>
<organism>
    <name type="scientific">Mus musculus</name>
    <name type="common">Mouse</name>
    <dbReference type="NCBI Taxonomy" id="10090"/>
    <lineage>
        <taxon>Eukaryota</taxon>
        <taxon>Metazoa</taxon>
        <taxon>Chordata</taxon>
        <taxon>Craniata</taxon>
        <taxon>Vertebrata</taxon>
        <taxon>Euteleostomi</taxon>
        <taxon>Mammalia</taxon>
        <taxon>Eutheria</taxon>
        <taxon>Euarchontoglires</taxon>
        <taxon>Glires</taxon>
        <taxon>Rodentia</taxon>
        <taxon>Myomorpha</taxon>
        <taxon>Muroidea</taxon>
        <taxon>Muridae</taxon>
        <taxon>Murinae</taxon>
        <taxon>Mus</taxon>
        <taxon>Mus</taxon>
    </lineage>
</organism>
<gene>
    <name type="primary">Kcnj6</name>
    <name type="synonym">Girk2</name>
    <name type="synonym">Kcnj7</name>
    <name type="synonym">W</name>
</gene>
<name>KCNJ6_MOUSE</name>
<keyword id="KW-0002">3D-structure</keyword>
<keyword id="KW-0025">Alternative splicing</keyword>
<keyword id="KW-0903">Direct protein sequencing</keyword>
<keyword id="KW-0225">Disease variant</keyword>
<keyword id="KW-0407">Ion channel</keyword>
<keyword id="KW-0406">Ion transport</keyword>
<keyword id="KW-0472">Membrane</keyword>
<keyword id="KW-0597">Phosphoprotein</keyword>
<keyword id="KW-0630">Potassium</keyword>
<keyword id="KW-0633">Potassium transport</keyword>
<keyword id="KW-1185">Reference proteome</keyword>
<keyword id="KW-0812">Transmembrane</keyword>
<keyword id="KW-1133">Transmembrane helix</keyword>
<keyword id="KW-0813">Transport</keyword>
<keyword id="KW-0851">Voltage-gated channel</keyword>
<accession>P48542</accession>
<accession>O70290</accession>
<accession>P70216</accession>
<accession>P70306</accession>
<accession>P70307</accession>
<accession>P70308</accession>
<accession>P70309</accession>
<accession>P70454</accession>
<accession>Q9QYH5</accession>
<comment type="function">
    <text evidence="2 6">Inward rectifier potassium channels are characterized by a greater tendency to allow potassium to flow into the cell rather than out of it. Their voltage dependence is regulated by the concentration of extracellular potassium; as external potassium is raised, the voltage range of the channel opening shifts to more positive voltages. The inward rectification is mainly due to the blockage of outward current by internal magnesium. This potassium channel is controlled by G proteins (By similarity). Forms a functional channel in association with KCNJ3/GIRK1 (PubMed:10341034).</text>
</comment>
<comment type="function">
    <molecule>Isoform GIRK2-1</molecule>
    <text evidence="8 10">Inward rectifier potassium channels are characterized by a greater tendency to allow potassium to flow into the cell rather than out of it. Their voltage dependence is regulated by the concentration of extracellular potassium; as external potassium is raised, the voltage range of the channel opening shifts to more positive voltages. The inward rectification is mainly due to the blockage of outward current by internal magnesium. This potassium channel is controlled by G proteins.</text>
</comment>
<comment type="function">
    <molecule>Isoform GIRK2B</molecule>
    <text evidence="11">Inward rectifier potassium channels are characterized by a greater tendency to allow potassium to flow into the cell rather than out of it. Their voltage dependence is regulated by the concentration of extracellular potassium; as external potassium is raised, the voltage range of the channel opening shifts to more positive voltages. The inward rectification is mainly due to the blockage of outward current by internal magnesium. This potassium channel is controlled by G proteins.</text>
</comment>
<comment type="function">
    <molecule>Isoform GIRK2D</molecule>
    <text evidence="7">Inward rectifier potassium channels are characterized by a greater tendency to allow potassium to flow into the cell rather than out of it. Their voltage dependence is regulated by the concentration of extracellular potassium; as external potassium is raised, the voltage range of the channel opening shifts to more positive voltages. The inward rectification is mainly due to the blockage of outward current by internal magnesium. This potassium channel is controlled by G proteins.</text>
</comment>
<comment type="catalytic activity">
    <molecule>Isoform GIRK2-1</molecule>
    <reaction evidence="8 10">
        <text>K(+)(in) = K(+)(out)</text>
        <dbReference type="Rhea" id="RHEA:29463"/>
        <dbReference type="ChEBI" id="CHEBI:29103"/>
    </reaction>
</comment>
<comment type="catalytic activity">
    <molecule>Isoform GIRK2B</molecule>
    <reaction evidence="11">
        <text>K(+)(in) = K(+)(out)</text>
        <dbReference type="Rhea" id="RHEA:29463"/>
        <dbReference type="ChEBI" id="CHEBI:29103"/>
    </reaction>
</comment>
<comment type="catalytic activity">
    <molecule>Isoform GIRK2D</molecule>
    <reaction evidence="7">
        <text>K(+)(in) = K(+)(out)</text>
        <dbReference type="Rhea" id="RHEA:29463"/>
        <dbReference type="ChEBI" id="CHEBI:29103"/>
    </reaction>
</comment>
<comment type="activity regulation">
    <text evidence="3">Activated by phosphatidylinositol 4,5 biphosphate (PtdIns(4,5)P2).</text>
</comment>
<comment type="subunit">
    <text evidence="2 3 6">Associates with KCNJ3/GIRK1to form a G-protein-activated heteromultimer pore-forming unit (PubMed:10341034). Associates with KCNJ5/GRIK4 to form a G-protein-activated heteromultimer pore-forming unit. The resulting inward current is much larger. Interacts (via PDZ-binding motif) with SNX27 (via PDZ domain); the interaction is required when endocytosed to prevent degradation in lysosomes and promote recycling to the plasma membrane (By similarity).</text>
</comment>
<comment type="subunit">
    <molecule>Isoform GIRK2A</molecule>
    <text evidence="8">Associates with KCNJ3/GRIK1 to form a G-protein-activated heteromultimer pore-forming unit.</text>
</comment>
<comment type="subunit">
    <molecule>Isoform GIRK2-1</molecule>
    <text evidence="8">Associates with KCNJ3/GRIK1 to form a G-protein-activated heteromultimer pore-forming unit. The resulting inward current is much larger.</text>
</comment>
<comment type="subunit">
    <molecule>Isoform GIRK2B</molecule>
    <text evidence="11">Associates with KCNJ3/GRIK1 to form a G-protein-activated heteromultimer pore-forming unit. The resulting inward current is much larger.</text>
</comment>
<comment type="subunit">
    <molecule>Isoform GIRK2D</molecule>
    <text evidence="7">Associates with KCNJ3/GRIK1 to form a G-protein-activated heteromultimer pore-forming unit.</text>
</comment>
<comment type="subcellular location">
    <subcellularLocation>
        <location evidence="4">Membrane</location>
        <topology evidence="4">Multi-pass membrane protein</topology>
    </subcellularLocation>
</comment>
<comment type="subcellular location">
    <molecule>Isoform GIRK2D</molecule>
    <subcellularLocation>
        <location evidence="7">Membrane</location>
        <topology evidence="4">Multi-pass membrane protein</topology>
    </subcellularLocation>
</comment>
<comment type="alternative products">
    <event type="alternative splicing"/>
    <isoform>
        <id>P48542-1</id>
        <name>GIRK2A</name>
        <sequence type="displayed"/>
    </isoform>
    <isoform>
        <id>P48542-2</id>
        <name>GIRK2-1</name>
        <sequence type="described" ref="VSP_002803"/>
    </isoform>
    <isoform>
        <id>P48542-3</id>
        <name>GIRK2B</name>
        <sequence type="described" ref="VSP_002804 VSP_002805"/>
    </isoform>
    <isoform>
        <id>P48542-4</id>
        <name>GIRK2C</name>
        <sequence type="described" ref="VSP_002806 VSP_002807 VSP_002808"/>
    </isoform>
    <isoform>
        <id>P48542-5</id>
        <name>GIRK2D</name>
        <name>KIR3.2D</name>
        <sequence type="not described"/>
    </isoform>
    <text>Additional isoforms seem to exist.</text>
</comment>
<comment type="tissue specificity">
    <text evidence="8">Expressed in the brain.</text>
</comment>
<comment type="disease">
    <text evidence="9">Defects in Kcnj6 are the cause of the weaver (wv) phenotype. Homozygous animals suffer from severe ataxia that is obvious by about the second postnatal week. The cerebellum of these animals is drastically reduced in size due to depletion of the major cell type of cerebellum, the granule cell neuron. Heterozygous animals are not ataxic but have an intermediate number of surviving granule cells. Male homozygotes are sterile, because of complete failure of sperm production. Both hetero- and homozygous animals undergo sporadic tonic-clonic seizures.</text>
</comment>
<comment type="similarity">
    <text evidence="14">Belongs to the inward rectifier-type potassium channel (TC 1.A.2.1) family. KCNJ6 subfamily.</text>
</comment>
<evidence type="ECO:0000250" key="1"/>
<evidence type="ECO:0000250" key="2">
    <source>
        <dbReference type="UniProtKB" id="P48051"/>
    </source>
</evidence>
<evidence type="ECO:0000250" key="3">
    <source>
        <dbReference type="UniProtKB" id="P48550"/>
    </source>
</evidence>
<evidence type="ECO:0000255" key="4"/>
<evidence type="ECO:0000256" key="5">
    <source>
        <dbReference type="SAM" id="MobiDB-lite"/>
    </source>
</evidence>
<evidence type="ECO:0000269" key="6">
    <source>
    </source>
</evidence>
<evidence type="ECO:0000269" key="7">
    <source>
    </source>
</evidence>
<evidence type="ECO:0000269" key="8">
    <source>
    </source>
</evidence>
<evidence type="ECO:0000269" key="9">
    <source>
    </source>
</evidence>
<evidence type="ECO:0000269" key="10">
    <source>
    </source>
</evidence>
<evidence type="ECO:0000269" key="11">
    <source>
    </source>
</evidence>
<evidence type="ECO:0000303" key="12">
    <source>
    </source>
</evidence>
<evidence type="ECO:0000303" key="13">
    <source>
    </source>
</evidence>
<evidence type="ECO:0000305" key="14"/>
<evidence type="ECO:0007744" key="15">
    <source>
    </source>
</evidence>
<evidence type="ECO:0007829" key="16">
    <source>
        <dbReference type="PDB" id="3SYA"/>
    </source>
</evidence>
<evidence type="ECO:0007829" key="17">
    <source>
        <dbReference type="PDB" id="3SYP"/>
    </source>
</evidence>
<evidence type="ECO:0007829" key="18">
    <source>
        <dbReference type="PDB" id="3VSQ"/>
    </source>
</evidence>
<evidence type="ECO:0007829" key="19">
    <source>
        <dbReference type="PDB" id="4KFM"/>
    </source>
</evidence>
<evidence type="ECO:0007829" key="20">
    <source>
        <dbReference type="PDB" id="6XEU"/>
    </source>
</evidence>
<evidence type="ECO:0007829" key="21">
    <source>
        <dbReference type="PDB" id="6XEV"/>
    </source>
</evidence>
<evidence type="ECO:0007829" key="22">
    <source>
        <dbReference type="PDB" id="6XIT"/>
    </source>
</evidence>